<feature type="chain" id="PRO_0000117366" description="NADH-ubiquinone oxidoreductase chain 1">
    <location>
        <begin position="1"/>
        <end position="324"/>
    </location>
</feature>
<feature type="transmembrane region" description="Helical" evidence="3">
    <location>
        <begin position="10"/>
        <end position="30"/>
    </location>
</feature>
<feature type="transmembrane region" description="Helical" evidence="3">
    <location>
        <begin position="76"/>
        <end position="96"/>
    </location>
</feature>
<feature type="transmembrane region" description="Helical" evidence="3">
    <location>
        <begin position="107"/>
        <end position="127"/>
    </location>
</feature>
<feature type="transmembrane region" description="Helical" evidence="3">
    <location>
        <begin position="154"/>
        <end position="174"/>
    </location>
</feature>
<feature type="transmembrane region" description="Helical" evidence="3">
    <location>
        <begin position="178"/>
        <end position="198"/>
    </location>
</feature>
<feature type="transmembrane region" description="Helical" evidence="3">
    <location>
        <begin position="230"/>
        <end position="250"/>
    </location>
</feature>
<feature type="transmembrane region" description="Helical" evidence="3">
    <location>
        <begin position="260"/>
        <end position="280"/>
    </location>
</feature>
<feature type="transmembrane region" description="Helical" evidence="3">
    <location>
        <begin position="300"/>
        <end position="320"/>
    </location>
</feature>
<sequence>MTLPTLTNLLIMTLSYILPILIAVAFLTLVERKILSYMQARKGPNIVGPFGLLQPVADGVKLFIKEPIRPSTSSPFLFIITPILALLLALTIWVPLPLPFPLADLNLGLLFLLAMSSLTVYSLLWSGWASNSKYALIGALRAVAQTISYEVTLAIILLSTIMLSGNYTLSTLAITQEPIYLIFSAWPLAMMWYISTLAETNRAPFDLTEGESELVSGFNVEYAAGPFAMFFLAEYANIMLMNTLTTVLFLNPSFLNLPPELFPIALATKTLLLSSSFLWIRASYPRFRYDQLMHLLWKNFLPLTLALCLWHTSMPISYAGLPPI</sequence>
<proteinExistence type="inferred from homology"/>
<accession>P18936</accession>
<reference key="1">
    <citation type="journal article" date="1990" name="J. Mol. Biol.">
        <title>Sequence and gene organization of the chicken mitochondrial genome. A novel gene order in higher vertebrates.</title>
        <authorList>
            <person name="Desjardins P."/>
            <person name="Morais R."/>
        </authorList>
    </citation>
    <scope>NUCLEOTIDE SEQUENCE [GENOMIC DNA]</scope>
    <source>
        <strain evidence="5">Red jungle fowl</strain>
    </source>
</reference>
<gene>
    <name type="primary">MT-ND1</name>
    <name type="synonym">MTND1</name>
    <name type="synonym">NADH1</name>
    <name type="synonym">ND1</name>
</gene>
<evidence type="ECO:0000250" key="1">
    <source>
        <dbReference type="UniProtKB" id="P03886"/>
    </source>
</evidence>
<evidence type="ECO:0000250" key="2">
    <source>
        <dbReference type="UniProtKB" id="P03887"/>
    </source>
</evidence>
<evidence type="ECO:0000255" key="3"/>
<evidence type="ECO:0000305" key="4"/>
<evidence type="ECO:0000312" key="5">
    <source>
        <dbReference type="Proteomes" id="UP000000539"/>
    </source>
</evidence>
<protein>
    <recommendedName>
        <fullName>NADH-ubiquinone oxidoreductase chain 1</fullName>
        <ecNumber evidence="1">7.1.1.2</ecNumber>
    </recommendedName>
    <alternativeName>
        <fullName>NADH dehydrogenase subunit 1</fullName>
    </alternativeName>
</protein>
<comment type="function">
    <text evidence="1">Core subunit of the mitochondrial membrane respiratory chain NADH dehydrogenase (Complex I) which catalyzes electron transfer from NADH through the respiratory chain, using ubiquinone as an electron acceptor. Essential for the catalytic activity and assembly of complex I.</text>
</comment>
<comment type="catalytic activity">
    <reaction evidence="1">
        <text>a ubiquinone + NADH + 5 H(+)(in) = a ubiquinol + NAD(+) + 4 H(+)(out)</text>
        <dbReference type="Rhea" id="RHEA:29091"/>
        <dbReference type="Rhea" id="RHEA-COMP:9565"/>
        <dbReference type="Rhea" id="RHEA-COMP:9566"/>
        <dbReference type="ChEBI" id="CHEBI:15378"/>
        <dbReference type="ChEBI" id="CHEBI:16389"/>
        <dbReference type="ChEBI" id="CHEBI:17976"/>
        <dbReference type="ChEBI" id="CHEBI:57540"/>
        <dbReference type="ChEBI" id="CHEBI:57945"/>
        <dbReference type="EC" id="7.1.1.2"/>
    </reaction>
</comment>
<comment type="subunit">
    <text evidence="2">Core subunit of respiratory chain NADH dehydrogenase (Complex I) which is composed of 45 different subunits.</text>
</comment>
<comment type="subcellular location">
    <subcellularLocation>
        <location evidence="2">Mitochondrion inner membrane</location>
        <topology evidence="3">Multi-pass membrane protein</topology>
    </subcellularLocation>
</comment>
<comment type="similarity">
    <text evidence="4">Belongs to the complex I subunit 1 family.</text>
</comment>
<dbReference type="EC" id="7.1.1.2" evidence="1"/>
<dbReference type="EMBL" id="X52392">
    <property type="protein sequence ID" value="CAA36625.1"/>
    <property type="molecule type" value="Genomic_DNA"/>
</dbReference>
<dbReference type="PIR" id="S10187">
    <property type="entry name" value="S10187"/>
</dbReference>
<dbReference type="RefSeq" id="NP_006915.1">
    <property type="nucleotide sequence ID" value="NC_001323.1"/>
</dbReference>
<dbReference type="SMR" id="P18936"/>
<dbReference type="FunCoup" id="P18936">
    <property type="interactions" value="22"/>
</dbReference>
<dbReference type="STRING" id="9031.ENSGALP00000056694"/>
<dbReference type="PaxDb" id="9031-ENSGALP00000034612"/>
<dbReference type="Ensembl" id="ENSGALT00010000007.1">
    <property type="protein sequence ID" value="ENSGALP00010000002.1"/>
    <property type="gene ID" value="ENSGALG00010000007.1"/>
</dbReference>
<dbReference type="VEuPathDB" id="HostDB:geneid_63549479"/>
<dbReference type="eggNOG" id="KOG4770">
    <property type="taxonomic scope" value="Eukaryota"/>
</dbReference>
<dbReference type="GeneTree" id="ENSGT00390000006621"/>
<dbReference type="HOGENOM" id="CLU_015134_0_1_1"/>
<dbReference type="InParanoid" id="P18936"/>
<dbReference type="OMA" id="WSGWASN"/>
<dbReference type="OrthoDB" id="531329at2759"/>
<dbReference type="PhylomeDB" id="P18936"/>
<dbReference type="TreeFam" id="TF352957"/>
<dbReference type="Reactome" id="R-GGA-611105">
    <property type="pathway name" value="Respiratory electron transport"/>
</dbReference>
<dbReference type="Reactome" id="R-GGA-6799198">
    <property type="pathway name" value="Complex I biogenesis"/>
</dbReference>
<dbReference type="PRO" id="PR:P18936"/>
<dbReference type="Proteomes" id="UP000000539">
    <property type="component" value="Mitochondrion MT"/>
</dbReference>
<dbReference type="Bgee" id="ENSGALG00000042750">
    <property type="expression patterns" value="Expressed in spermatocyte and 12 other cell types or tissues"/>
</dbReference>
<dbReference type="GO" id="GO:0005743">
    <property type="term" value="C:mitochondrial inner membrane"/>
    <property type="evidence" value="ECO:0000250"/>
    <property type="project" value="UniProtKB"/>
</dbReference>
<dbReference type="GO" id="GO:0045271">
    <property type="term" value="C:respiratory chain complex I"/>
    <property type="evidence" value="ECO:0000318"/>
    <property type="project" value="GO_Central"/>
</dbReference>
<dbReference type="GO" id="GO:0008137">
    <property type="term" value="F:NADH dehydrogenase (ubiquinone) activity"/>
    <property type="evidence" value="ECO:0000250"/>
    <property type="project" value="UniProtKB"/>
</dbReference>
<dbReference type="GO" id="GO:0009060">
    <property type="term" value="P:aerobic respiration"/>
    <property type="evidence" value="ECO:0000318"/>
    <property type="project" value="GO_Central"/>
</dbReference>
<dbReference type="GO" id="GO:0006120">
    <property type="term" value="P:mitochondrial electron transport, NADH to ubiquinone"/>
    <property type="evidence" value="ECO:0000250"/>
    <property type="project" value="UniProtKB"/>
</dbReference>
<dbReference type="GO" id="GO:0032981">
    <property type="term" value="P:mitochondrial respiratory chain complex I assembly"/>
    <property type="evidence" value="ECO:0000250"/>
    <property type="project" value="UniProtKB"/>
</dbReference>
<dbReference type="HAMAP" id="MF_01350">
    <property type="entry name" value="NDH1_NuoH"/>
    <property type="match status" value="1"/>
</dbReference>
<dbReference type="InterPro" id="IPR001694">
    <property type="entry name" value="NADH_UbQ_OxRdtase_su1/FPO"/>
</dbReference>
<dbReference type="InterPro" id="IPR018086">
    <property type="entry name" value="NADH_UbQ_OxRdtase_su1_CS"/>
</dbReference>
<dbReference type="PANTHER" id="PTHR11432">
    <property type="entry name" value="NADH DEHYDROGENASE SUBUNIT 1"/>
    <property type="match status" value="1"/>
</dbReference>
<dbReference type="PANTHER" id="PTHR11432:SF3">
    <property type="entry name" value="NADH-UBIQUINONE OXIDOREDUCTASE CHAIN 1"/>
    <property type="match status" value="1"/>
</dbReference>
<dbReference type="Pfam" id="PF00146">
    <property type="entry name" value="NADHdh"/>
    <property type="match status" value="1"/>
</dbReference>
<dbReference type="PROSITE" id="PS00667">
    <property type="entry name" value="COMPLEX1_ND1_1"/>
    <property type="match status" value="1"/>
</dbReference>
<dbReference type="PROSITE" id="PS00668">
    <property type="entry name" value="COMPLEX1_ND1_2"/>
    <property type="match status" value="1"/>
</dbReference>
<keyword id="KW-0249">Electron transport</keyword>
<keyword id="KW-0472">Membrane</keyword>
<keyword id="KW-0496">Mitochondrion</keyword>
<keyword id="KW-0999">Mitochondrion inner membrane</keyword>
<keyword id="KW-0520">NAD</keyword>
<keyword id="KW-1185">Reference proteome</keyword>
<keyword id="KW-0679">Respiratory chain</keyword>
<keyword id="KW-1278">Translocase</keyword>
<keyword id="KW-0812">Transmembrane</keyword>
<keyword id="KW-1133">Transmembrane helix</keyword>
<keyword id="KW-0813">Transport</keyword>
<keyword id="KW-0830">Ubiquinone</keyword>
<organism>
    <name type="scientific">Gallus gallus</name>
    <name type="common">Chicken</name>
    <dbReference type="NCBI Taxonomy" id="9031"/>
    <lineage>
        <taxon>Eukaryota</taxon>
        <taxon>Metazoa</taxon>
        <taxon>Chordata</taxon>
        <taxon>Craniata</taxon>
        <taxon>Vertebrata</taxon>
        <taxon>Euteleostomi</taxon>
        <taxon>Archelosauria</taxon>
        <taxon>Archosauria</taxon>
        <taxon>Dinosauria</taxon>
        <taxon>Saurischia</taxon>
        <taxon>Theropoda</taxon>
        <taxon>Coelurosauria</taxon>
        <taxon>Aves</taxon>
        <taxon>Neognathae</taxon>
        <taxon>Galloanserae</taxon>
        <taxon>Galliformes</taxon>
        <taxon>Phasianidae</taxon>
        <taxon>Phasianinae</taxon>
        <taxon>Gallus</taxon>
    </lineage>
</organism>
<geneLocation type="mitochondrion"/>
<name>NU1M_CHICK</name>